<accession>B0VT55</accession>
<sequence length="155" mass="17214">MLPFKLWVDADALPKILREVILRASDRYQLEVIFVANQNVGITPSVRIKSLQVLSGADQADQEIVNRMSENDIVITQDIPLAAQVIEKGGIAIHPRGEVYTTANVKARLHLRDFMDTLRGAGVQTGGPPPISERDKREFSSALDQTILKQKRKTA</sequence>
<dbReference type="EMBL" id="CU468230">
    <property type="protein sequence ID" value="CAP00242.1"/>
    <property type="molecule type" value="Genomic_DNA"/>
</dbReference>
<dbReference type="KEGG" id="abm:ABSDF0879"/>
<dbReference type="HOGENOM" id="CLU_106619_2_1_6"/>
<dbReference type="BioCyc" id="ABAU509170:GCL9-705-MONOMER"/>
<dbReference type="Proteomes" id="UP000001741">
    <property type="component" value="Chromosome"/>
</dbReference>
<dbReference type="CDD" id="cd18720">
    <property type="entry name" value="PIN_YqxD-like"/>
    <property type="match status" value="1"/>
</dbReference>
<dbReference type="HAMAP" id="MF_00489">
    <property type="entry name" value="UPF0178"/>
    <property type="match status" value="1"/>
</dbReference>
<dbReference type="InterPro" id="IPR003791">
    <property type="entry name" value="UPF0178"/>
</dbReference>
<dbReference type="NCBIfam" id="NF001095">
    <property type="entry name" value="PRK00124.1"/>
    <property type="match status" value="1"/>
</dbReference>
<dbReference type="PANTHER" id="PTHR35146">
    <property type="entry name" value="UPF0178 PROTEIN YAII"/>
    <property type="match status" value="1"/>
</dbReference>
<dbReference type="PANTHER" id="PTHR35146:SF1">
    <property type="entry name" value="UPF0178 PROTEIN YAII"/>
    <property type="match status" value="1"/>
</dbReference>
<dbReference type="Pfam" id="PF02639">
    <property type="entry name" value="DUF188"/>
    <property type="match status" value="1"/>
</dbReference>
<organism>
    <name type="scientific">Acinetobacter baumannii (strain SDF)</name>
    <dbReference type="NCBI Taxonomy" id="509170"/>
    <lineage>
        <taxon>Bacteria</taxon>
        <taxon>Pseudomonadati</taxon>
        <taxon>Pseudomonadota</taxon>
        <taxon>Gammaproteobacteria</taxon>
        <taxon>Moraxellales</taxon>
        <taxon>Moraxellaceae</taxon>
        <taxon>Acinetobacter</taxon>
        <taxon>Acinetobacter calcoaceticus/baumannii complex</taxon>
    </lineage>
</organism>
<evidence type="ECO:0000255" key="1">
    <source>
        <dbReference type="HAMAP-Rule" id="MF_00489"/>
    </source>
</evidence>
<evidence type="ECO:0000256" key="2">
    <source>
        <dbReference type="SAM" id="MobiDB-lite"/>
    </source>
</evidence>
<name>Y879_ACIBS</name>
<protein>
    <recommendedName>
        <fullName evidence="1">UPF0178 protein ABSDF0879</fullName>
    </recommendedName>
</protein>
<gene>
    <name type="ordered locus">ABSDF0879</name>
</gene>
<reference key="1">
    <citation type="journal article" date="2008" name="PLoS ONE">
        <title>Comparative analysis of Acinetobacters: three genomes for three lifestyles.</title>
        <authorList>
            <person name="Vallenet D."/>
            <person name="Nordmann P."/>
            <person name="Barbe V."/>
            <person name="Poirel L."/>
            <person name="Mangenot S."/>
            <person name="Bataille E."/>
            <person name="Dossat C."/>
            <person name="Gas S."/>
            <person name="Kreimeyer A."/>
            <person name="Lenoble P."/>
            <person name="Oztas S."/>
            <person name="Poulain J."/>
            <person name="Segurens B."/>
            <person name="Robert C."/>
            <person name="Abergel C."/>
            <person name="Claverie J.-M."/>
            <person name="Raoult D."/>
            <person name="Medigue C."/>
            <person name="Weissenbach J."/>
            <person name="Cruveiller S."/>
        </authorList>
    </citation>
    <scope>NUCLEOTIDE SEQUENCE [LARGE SCALE GENOMIC DNA]</scope>
    <source>
        <strain>SDF</strain>
    </source>
</reference>
<feature type="chain" id="PRO_1000126166" description="UPF0178 protein ABSDF0879">
    <location>
        <begin position="1"/>
        <end position="155"/>
    </location>
</feature>
<feature type="region of interest" description="Disordered" evidence="2">
    <location>
        <begin position="120"/>
        <end position="155"/>
    </location>
</feature>
<proteinExistence type="inferred from homology"/>
<comment type="similarity">
    <text evidence="1">Belongs to the UPF0178 family.</text>
</comment>